<keyword id="KW-0106">Calcium</keyword>
<keyword id="KW-0903">Direct protein sequencing</keyword>
<keyword id="KW-1015">Disulfide bond</keyword>
<keyword id="KW-0378">Hydrolase</keyword>
<keyword id="KW-0442">Lipid degradation</keyword>
<keyword id="KW-0443">Lipid metabolism</keyword>
<keyword id="KW-0479">Metal-binding</keyword>
<keyword id="KW-0528">Neurotoxin</keyword>
<keyword id="KW-0638">Presynaptic neurotoxin</keyword>
<keyword id="KW-0964">Secreted</keyword>
<keyword id="KW-0800">Toxin</keyword>
<dbReference type="EC" id="3.1.1.4"/>
<dbReference type="GO" id="GO:0005576">
    <property type="term" value="C:extracellular region"/>
    <property type="evidence" value="ECO:0007669"/>
    <property type="project" value="UniProtKB-SubCell"/>
</dbReference>
<dbReference type="GO" id="GO:0046872">
    <property type="term" value="F:metal ion binding"/>
    <property type="evidence" value="ECO:0007669"/>
    <property type="project" value="UniProtKB-KW"/>
</dbReference>
<dbReference type="GO" id="GO:0004623">
    <property type="term" value="F:phospholipase A2 activity"/>
    <property type="evidence" value="ECO:0007669"/>
    <property type="project" value="UniProtKB-EC"/>
</dbReference>
<dbReference type="GO" id="GO:0090729">
    <property type="term" value="F:toxin activity"/>
    <property type="evidence" value="ECO:0007669"/>
    <property type="project" value="UniProtKB-KW"/>
</dbReference>
<dbReference type="GO" id="GO:0016042">
    <property type="term" value="P:lipid catabolic process"/>
    <property type="evidence" value="ECO:0007669"/>
    <property type="project" value="UniProtKB-KW"/>
</dbReference>
<organism>
    <name type="scientific">Crotalus vegrandis</name>
    <name type="common">Uracoan rattlesnake</name>
    <name type="synonym">Crotalus durissus vegrandis</name>
    <dbReference type="NCBI Taxonomy" id="184545"/>
    <lineage>
        <taxon>Eukaryota</taxon>
        <taxon>Metazoa</taxon>
        <taxon>Chordata</taxon>
        <taxon>Craniata</taxon>
        <taxon>Vertebrata</taxon>
        <taxon>Euteleostomi</taxon>
        <taxon>Lepidosauria</taxon>
        <taxon>Squamata</taxon>
        <taxon>Bifurcata</taxon>
        <taxon>Unidentata</taxon>
        <taxon>Episquamata</taxon>
        <taxon>Toxicofera</taxon>
        <taxon>Serpentes</taxon>
        <taxon>Colubroidea</taxon>
        <taxon>Viperidae</taxon>
        <taxon>Crotalinae</taxon>
        <taxon>Crotalus</taxon>
    </lineage>
</organism>
<reference key="1">
    <citation type="journal article" date="2004" name="Biochem. J.">
        <title>Molecular evolution and structure-function relationships of crotoxin-like and asparagine-6-containing phospholipases A2 in pit viper venoms.</title>
        <authorList>
            <person name="Chen Y.-H."/>
            <person name="Wang Y.-M."/>
            <person name="Hseu M.-J."/>
            <person name="Tsai I.-H."/>
        </authorList>
    </citation>
    <scope>PROTEIN SEQUENCE</scope>
    <scope>FUNCTION</scope>
    <scope>SUBUNIT</scope>
    <scope>MASS SPECTROMETRY</scope>
    <source>
        <tissue>Venom</tissue>
    </source>
</reference>
<protein>
    <recommendedName>
        <fullName>Basic phospholipase A2 CB1</fullName>
        <shortName>svPLA2</shortName>
        <ecNumber>3.1.1.4</ecNumber>
    </recommendedName>
    <alternativeName>
        <fullName>Phosphatidylcholine 2-acylhydrolase</fullName>
    </alternativeName>
</protein>
<feature type="chain" id="PRO_0000418565" description="Basic phospholipase A2 CB1">
    <location>
        <begin position="1"/>
        <end position="23" status="greater than"/>
    </location>
</feature>
<feature type="non-terminal residue">
    <location>
        <position position="23"/>
    </location>
</feature>
<name>PA2B1_CROVE</name>
<comment type="function">
    <text evidence="2">Snake venom phospholipase A2 (PLA2) that shows presynaptic neurotoxicity. PLA2 catalyzes the calcium-dependent hydrolysis of the 2-acyl groups in 3-sn-phosphoglycerides.</text>
</comment>
<comment type="catalytic activity">
    <reaction>
        <text>a 1,2-diacyl-sn-glycero-3-phosphocholine + H2O = a 1-acyl-sn-glycero-3-phosphocholine + a fatty acid + H(+)</text>
        <dbReference type="Rhea" id="RHEA:15801"/>
        <dbReference type="ChEBI" id="CHEBI:15377"/>
        <dbReference type="ChEBI" id="CHEBI:15378"/>
        <dbReference type="ChEBI" id="CHEBI:28868"/>
        <dbReference type="ChEBI" id="CHEBI:57643"/>
        <dbReference type="ChEBI" id="CHEBI:58168"/>
        <dbReference type="EC" id="3.1.1.4"/>
    </reaction>
</comment>
<comment type="cofactor">
    <cofactor evidence="1">
        <name>Ca(2+)</name>
        <dbReference type="ChEBI" id="CHEBI:29108"/>
    </cofactor>
    <text evidence="1">Binds 1 Ca(2+) ion.</text>
</comment>
<comment type="subunit">
    <text evidence="2">Heterodimer of an acidic subunit and a basic chain. The acidic subunit is non-toxic, without enzymatic activity and comprises 3 peptides that are cross-linked by 7 disulfide bridges. The basic subunit is toxic, has phospholipase A2 activity and is composed of a single chain.</text>
</comment>
<comment type="subcellular location">
    <subcellularLocation>
        <location>Secreted</location>
    </subcellularLocation>
</comment>
<comment type="tissue specificity">
    <text>Expressed by the venom gland.</text>
</comment>
<comment type="PTM">
    <text evidence="1">Contains 7 disulfide bonds.</text>
</comment>
<comment type="mass spectrometry"/>
<comment type="similarity">
    <text evidence="3">Belongs to the phospholipase A2 family. Group II subfamily.</text>
</comment>
<evidence type="ECO:0000250" key="1"/>
<evidence type="ECO:0000269" key="2">
    <source>
    </source>
</evidence>
<evidence type="ECO:0000305" key="3"/>
<sequence>HLLQFNKMIKFETRKNAIPFYAF</sequence>
<proteinExistence type="evidence at protein level"/>
<accession>P0DJN0</accession>